<gene>
    <name type="primary">PUP4</name>
    <name type="ordered locus">At1g30840</name>
    <name type="ORF">T17H7.15</name>
</gene>
<proteinExistence type="evidence at transcript level"/>
<evidence type="ECO:0000255" key="1"/>
<evidence type="ECO:0000256" key="2">
    <source>
        <dbReference type="SAM" id="MobiDB-lite"/>
    </source>
</evidence>
<evidence type="ECO:0000305" key="3"/>
<reference key="1">
    <citation type="journal article" date="2000" name="Nature">
        <title>Sequence and analysis of chromosome 1 of the plant Arabidopsis thaliana.</title>
        <authorList>
            <person name="Theologis A."/>
            <person name="Ecker J.R."/>
            <person name="Palm C.J."/>
            <person name="Federspiel N.A."/>
            <person name="Kaul S."/>
            <person name="White O."/>
            <person name="Alonso J."/>
            <person name="Altafi H."/>
            <person name="Araujo R."/>
            <person name="Bowman C.L."/>
            <person name="Brooks S.Y."/>
            <person name="Buehler E."/>
            <person name="Chan A."/>
            <person name="Chao Q."/>
            <person name="Chen H."/>
            <person name="Cheuk R.F."/>
            <person name="Chin C.W."/>
            <person name="Chung M.K."/>
            <person name="Conn L."/>
            <person name="Conway A.B."/>
            <person name="Conway A.R."/>
            <person name="Creasy T.H."/>
            <person name="Dewar K."/>
            <person name="Dunn P."/>
            <person name="Etgu P."/>
            <person name="Feldblyum T.V."/>
            <person name="Feng J.-D."/>
            <person name="Fong B."/>
            <person name="Fujii C.Y."/>
            <person name="Gill J.E."/>
            <person name="Goldsmith A.D."/>
            <person name="Haas B."/>
            <person name="Hansen N.F."/>
            <person name="Hughes B."/>
            <person name="Huizar L."/>
            <person name="Hunter J.L."/>
            <person name="Jenkins J."/>
            <person name="Johnson-Hopson C."/>
            <person name="Khan S."/>
            <person name="Khaykin E."/>
            <person name="Kim C.J."/>
            <person name="Koo H.L."/>
            <person name="Kremenetskaia I."/>
            <person name="Kurtz D.B."/>
            <person name="Kwan A."/>
            <person name="Lam B."/>
            <person name="Langin-Hooper S."/>
            <person name="Lee A."/>
            <person name="Lee J.M."/>
            <person name="Lenz C.A."/>
            <person name="Li J.H."/>
            <person name="Li Y.-P."/>
            <person name="Lin X."/>
            <person name="Liu S.X."/>
            <person name="Liu Z.A."/>
            <person name="Luros J.S."/>
            <person name="Maiti R."/>
            <person name="Marziali A."/>
            <person name="Militscher J."/>
            <person name="Miranda M."/>
            <person name="Nguyen M."/>
            <person name="Nierman W.C."/>
            <person name="Osborne B.I."/>
            <person name="Pai G."/>
            <person name="Peterson J."/>
            <person name="Pham P.K."/>
            <person name="Rizzo M."/>
            <person name="Rooney T."/>
            <person name="Rowley D."/>
            <person name="Sakano H."/>
            <person name="Salzberg S.L."/>
            <person name="Schwartz J.R."/>
            <person name="Shinn P."/>
            <person name="Southwick A.M."/>
            <person name="Sun H."/>
            <person name="Tallon L.J."/>
            <person name="Tambunga G."/>
            <person name="Toriumi M.J."/>
            <person name="Town C.D."/>
            <person name="Utterback T."/>
            <person name="Van Aken S."/>
            <person name="Vaysberg M."/>
            <person name="Vysotskaia V.S."/>
            <person name="Walker M."/>
            <person name="Wu D."/>
            <person name="Yu G."/>
            <person name="Fraser C.M."/>
            <person name="Venter J.C."/>
            <person name="Davis R.W."/>
        </authorList>
    </citation>
    <scope>NUCLEOTIDE SEQUENCE [LARGE SCALE GENOMIC DNA]</scope>
    <source>
        <strain>cv. Columbia</strain>
    </source>
</reference>
<reference key="2">
    <citation type="journal article" date="2017" name="Plant J.">
        <title>Araport11: a complete reannotation of the Arabidopsis thaliana reference genome.</title>
        <authorList>
            <person name="Cheng C.Y."/>
            <person name="Krishnakumar V."/>
            <person name="Chan A.P."/>
            <person name="Thibaud-Nissen F."/>
            <person name="Schobel S."/>
            <person name="Town C.D."/>
        </authorList>
    </citation>
    <scope>GENOME REANNOTATION</scope>
    <source>
        <strain>cv. Columbia</strain>
    </source>
</reference>
<reference key="3">
    <citation type="journal article" date="2003" name="Science">
        <title>Empirical analysis of transcriptional activity in the Arabidopsis genome.</title>
        <authorList>
            <person name="Yamada K."/>
            <person name="Lim J."/>
            <person name="Dale J.M."/>
            <person name="Chen H."/>
            <person name="Shinn P."/>
            <person name="Palm C.J."/>
            <person name="Southwick A.M."/>
            <person name="Wu H.C."/>
            <person name="Kim C.J."/>
            <person name="Nguyen M."/>
            <person name="Pham P.K."/>
            <person name="Cheuk R.F."/>
            <person name="Karlin-Newmann G."/>
            <person name="Liu S.X."/>
            <person name="Lam B."/>
            <person name="Sakano H."/>
            <person name="Wu T."/>
            <person name="Yu G."/>
            <person name="Miranda M."/>
            <person name="Quach H.L."/>
            <person name="Tripp M."/>
            <person name="Chang C.H."/>
            <person name="Lee J.M."/>
            <person name="Toriumi M.J."/>
            <person name="Chan M.M."/>
            <person name="Tang C.C."/>
            <person name="Onodera C.S."/>
            <person name="Deng J.M."/>
            <person name="Akiyama K."/>
            <person name="Ansari Y."/>
            <person name="Arakawa T."/>
            <person name="Banh J."/>
            <person name="Banno F."/>
            <person name="Bowser L."/>
            <person name="Brooks S.Y."/>
            <person name="Carninci P."/>
            <person name="Chao Q."/>
            <person name="Choy N."/>
            <person name="Enju A."/>
            <person name="Goldsmith A.D."/>
            <person name="Gurjal M."/>
            <person name="Hansen N.F."/>
            <person name="Hayashizaki Y."/>
            <person name="Johnson-Hopson C."/>
            <person name="Hsuan V.W."/>
            <person name="Iida K."/>
            <person name="Karnes M."/>
            <person name="Khan S."/>
            <person name="Koesema E."/>
            <person name="Ishida J."/>
            <person name="Jiang P.X."/>
            <person name="Jones T."/>
            <person name="Kawai J."/>
            <person name="Kamiya A."/>
            <person name="Meyers C."/>
            <person name="Nakajima M."/>
            <person name="Narusaka M."/>
            <person name="Seki M."/>
            <person name="Sakurai T."/>
            <person name="Satou M."/>
            <person name="Tamse R."/>
            <person name="Vaysberg M."/>
            <person name="Wallender E.K."/>
            <person name="Wong C."/>
            <person name="Yamamura Y."/>
            <person name="Yuan S."/>
            <person name="Shinozaki K."/>
            <person name="Davis R.W."/>
            <person name="Theologis A."/>
            <person name="Ecker J.R."/>
        </authorList>
    </citation>
    <scope>NUCLEOTIDE SEQUENCE [LARGE SCALE MRNA]</scope>
    <source>
        <strain>cv. Columbia</strain>
    </source>
</reference>
<reference key="4">
    <citation type="submission" date="2002-03" db="EMBL/GenBank/DDBJ databases">
        <title>Full-length cDNA from Arabidopsis thaliana.</title>
        <authorList>
            <person name="Brover V.V."/>
            <person name="Troukhan M.E."/>
            <person name="Alexandrov N.A."/>
            <person name="Lu Y.-P."/>
            <person name="Flavell R.B."/>
            <person name="Feldmann K.A."/>
        </authorList>
    </citation>
    <scope>NUCLEOTIDE SEQUENCE [LARGE SCALE MRNA]</scope>
</reference>
<reference key="5">
    <citation type="journal article" date="2000" name="Plant Cell">
        <title>A new family of high-affinity transporters for adenine, cytosine, and purine derivatives in Arabidopsis.</title>
        <authorList>
            <person name="Gillissen B."/>
            <person name="Buerkle L."/>
            <person name="Andre B."/>
            <person name="Kuehn C."/>
            <person name="Rentsch D."/>
            <person name="Brandl B."/>
            <person name="Frommer W.B."/>
        </authorList>
    </citation>
    <scope>GENE FAMILY</scope>
    <scope>NOMENCLATURE</scope>
</reference>
<accession>Q9SY29</accession>
<keyword id="KW-0472">Membrane</keyword>
<keyword id="KW-1185">Reference proteome</keyword>
<keyword id="KW-0812">Transmembrane</keyword>
<keyword id="KW-1133">Transmembrane helix</keyword>
<keyword id="KW-0813">Transport</keyword>
<protein>
    <recommendedName>
        <fullName>Probable purine permease 4</fullName>
        <shortName>AtPUP4</shortName>
    </recommendedName>
</protein>
<name>PUP4_ARATH</name>
<feature type="chain" id="PRO_0000317391" description="Probable purine permease 4">
    <location>
        <begin position="1"/>
        <end position="382"/>
    </location>
</feature>
<feature type="transmembrane region" description="Helical" evidence="1">
    <location>
        <begin position="25"/>
        <end position="45"/>
    </location>
</feature>
<feature type="transmembrane region" description="Helical" evidence="1">
    <location>
        <begin position="62"/>
        <end position="82"/>
    </location>
</feature>
<feature type="transmembrane region" description="Helical" evidence="1">
    <location>
        <begin position="98"/>
        <end position="118"/>
    </location>
</feature>
<feature type="transmembrane region" description="Helical" evidence="1">
    <location>
        <begin position="121"/>
        <end position="141"/>
    </location>
</feature>
<feature type="transmembrane region" description="Helical" evidence="1">
    <location>
        <begin position="150"/>
        <end position="170"/>
    </location>
</feature>
<feature type="transmembrane region" description="Helical" evidence="1">
    <location>
        <begin position="185"/>
        <end position="205"/>
    </location>
</feature>
<feature type="transmembrane region" description="Helical" evidence="1">
    <location>
        <begin position="224"/>
        <end position="244"/>
    </location>
</feature>
<feature type="transmembrane region" description="Helical" evidence="1">
    <location>
        <begin position="260"/>
        <end position="280"/>
    </location>
</feature>
<feature type="transmembrane region" description="Helical" evidence="1">
    <location>
        <begin position="291"/>
        <end position="311"/>
    </location>
</feature>
<feature type="transmembrane region" description="Helical" evidence="1">
    <location>
        <begin position="315"/>
        <end position="335"/>
    </location>
</feature>
<feature type="domain" description="EamA">
    <location>
        <begin position="66"/>
        <end position="170"/>
    </location>
</feature>
<feature type="region of interest" description="Disordered" evidence="2">
    <location>
        <begin position="345"/>
        <end position="364"/>
    </location>
</feature>
<sequence length="382" mass="42321">MSDGRVNADPQQEENMVKPPVKRSLTLLIVTYFFLFFGSIASSLLAKYYFVYGGSSRWVSTWVQSAGFPLLLILIYFPHYVLKTTTRRPFTRFTLRHLIFSVLIGLVLGFNNFLFSWGTSYLPVSTSSLLLSTQLVFTLILSRIIVKQKITFSNLNCVVLLTLSSVLLALDSSKDKPSGLTKTKYFIGYVSTIGAGLLFALYLPVTEKLYRTVYCYAMVMEVQLVMEFAATVFATIGMACEGGFKEMVKEANHVFTKGPTFYWTFAILANVVTWQLSFAATSGMVYLTSGITGGICMTALLAMNVIGGVVAYGDVFGGVKIVSTVLCIWGFSSYTYGMYMKMKKEEKEKGEYSGVKTTEDSGEMEVEMGNVKDDVAAADDRA</sequence>
<organism>
    <name type="scientific">Arabidopsis thaliana</name>
    <name type="common">Mouse-ear cress</name>
    <dbReference type="NCBI Taxonomy" id="3702"/>
    <lineage>
        <taxon>Eukaryota</taxon>
        <taxon>Viridiplantae</taxon>
        <taxon>Streptophyta</taxon>
        <taxon>Embryophyta</taxon>
        <taxon>Tracheophyta</taxon>
        <taxon>Spermatophyta</taxon>
        <taxon>Magnoliopsida</taxon>
        <taxon>eudicotyledons</taxon>
        <taxon>Gunneridae</taxon>
        <taxon>Pentapetalae</taxon>
        <taxon>rosids</taxon>
        <taxon>malvids</taxon>
        <taxon>Brassicales</taxon>
        <taxon>Brassicaceae</taxon>
        <taxon>Camelineae</taxon>
        <taxon>Arabidopsis</taxon>
    </lineage>
</organism>
<comment type="subcellular location">
    <subcellularLocation>
        <location evidence="3">Membrane</location>
        <topology evidence="3">Multi-pass membrane protein</topology>
    </subcellularLocation>
</comment>
<comment type="similarity">
    <text evidence="3">Belongs to the purine permeases (TC 2.A.7.14) family.</text>
</comment>
<dbReference type="EMBL" id="AC004135">
    <property type="protein sequence ID" value="AAD32940.1"/>
    <property type="molecule type" value="Genomic_DNA"/>
</dbReference>
<dbReference type="EMBL" id="CP002684">
    <property type="protein sequence ID" value="AEE31282.1"/>
    <property type="molecule type" value="Genomic_DNA"/>
</dbReference>
<dbReference type="EMBL" id="CP002684">
    <property type="protein sequence ID" value="AEE31283.1"/>
    <property type="molecule type" value="Genomic_DNA"/>
</dbReference>
<dbReference type="EMBL" id="BT004160">
    <property type="protein sequence ID" value="AAO42180.1"/>
    <property type="molecule type" value="mRNA"/>
</dbReference>
<dbReference type="EMBL" id="BT005495">
    <property type="protein sequence ID" value="AAO63915.1"/>
    <property type="molecule type" value="mRNA"/>
</dbReference>
<dbReference type="EMBL" id="AY084641">
    <property type="protein sequence ID" value="AAM61204.1"/>
    <property type="molecule type" value="mRNA"/>
</dbReference>
<dbReference type="RefSeq" id="NP_001185119.1">
    <property type="nucleotide sequence ID" value="NM_001198190.1"/>
</dbReference>
<dbReference type="RefSeq" id="NP_564365.1">
    <property type="nucleotide sequence ID" value="NM_102821.3"/>
</dbReference>
<dbReference type="SMR" id="Q9SY29"/>
<dbReference type="BioGRID" id="25202">
    <property type="interactions" value="28"/>
</dbReference>
<dbReference type="FunCoup" id="Q9SY29">
    <property type="interactions" value="3"/>
</dbReference>
<dbReference type="IntAct" id="Q9SY29">
    <property type="interactions" value="26"/>
</dbReference>
<dbReference type="STRING" id="3702.Q9SY29"/>
<dbReference type="PaxDb" id="3702-AT1G30840.1"/>
<dbReference type="ProteomicsDB" id="226260"/>
<dbReference type="EnsemblPlants" id="AT1G30840.1">
    <property type="protein sequence ID" value="AT1G30840.1"/>
    <property type="gene ID" value="AT1G30840"/>
</dbReference>
<dbReference type="EnsemblPlants" id="AT1G30840.2">
    <property type="protein sequence ID" value="AT1G30840.2"/>
    <property type="gene ID" value="AT1G30840"/>
</dbReference>
<dbReference type="GeneID" id="839967"/>
<dbReference type="Gramene" id="AT1G30840.1">
    <property type="protein sequence ID" value="AT1G30840.1"/>
    <property type="gene ID" value="AT1G30840"/>
</dbReference>
<dbReference type="Gramene" id="AT1G30840.2">
    <property type="protein sequence ID" value="AT1G30840.2"/>
    <property type="gene ID" value="AT1G30840"/>
</dbReference>
<dbReference type="KEGG" id="ath:AT1G30840"/>
<dbReference type="Araport" id="AT1G30840"/>
<dbReference type="TAIR" id="AT1G30840">
    <property type="gene designation" value="PUP4"/>
</dbReference>
<dbReference type="eggNOG" id="ENOG502QVXU">
    <property type="taxonomic scope" value="Eukaryota"/>
</dbReference>
<dbReference type="HOGENOM" id="CLU_043459_0_1_1"/>
<dbReference type="InParanoid" id="Q9SY29"/>
<dbReference type="OMA" id="LGPKAYW"/>
<dbReference type="OrthoDB" id="683622at2759"/>
<dbReference type="PhylomeDB" id="Q9SY29"/>
<dbReference type="PRO" id="PR:Q9SY29"/>
<dbReference type="Proteomes" id="UP000006548">
    <property type="component" value="Chromosome 1"/>
</dbReference>
<dbReference type="ExpressionAtlas" id="Q9SY29">
    <property type="expression patterns" value="baseline and differential"/>
</dbReference>
<dbReference type="GO" id="GO:0016020">
    <property type="term" value="C:membrane"/>
    <property type="evidence" value="ECO:0000304"/>
    <property type="project" value="TAIR"/>
</dbReference>
<dbReference type="GO" id="GO:0005345">
    <property type="term" value="F:purine nucleobase transmembrane transporter activity"/>
    <property type="evidence" value="ECO:0000304"/>
    <property type="project" value="TAIR"/>
</dbReference>
<dbReference type="GO" id="GO:0015211">
    <property type="term" value="F:purine nucleoside transmembrane transporter activity"/>
    <property type="evidence" value="ECO:0007669"/>
    <property type="project" value="InterPro"/>
</dbReference>
<dbReference type="GO" id="GO:0006863">
    <property type="term" value="P:purine nucleobase transport"/>
    <property type="evidence" value="ECO:0000304"/>
    <property type="project" value="TAIR"/>
</dbReference>
<dbReference type="InterPro" id="IPR030182">
    <property type="entry name" value="PUP_plant"/>
</dbReference>
<dbReference type="PANTHER" id="PTHR31376">
    <property type="entry name" value="OS09G0467300 PROTEIN-RELATED"/>
    <property type="match status" value="1"/>
</dbReference>
<dbReference type="PANTHER" id="PTHR31376:SF3">
    <property type="entry name" value="PURINE PERMEASE 4-RELATED"/>
    <property type="match status" value="1"/>
</dbReference>
<dbReference type="Pfam" id="PF16913">
    <property type="entry name" value="PUNUT"/>
    <property type="match status" value="1"/>
</dbReference>
<dbReference type="SUPFAM" id="SSF103481">
    <property type="entry name" value="Multidrug resistance efflux transporter EmrE"/>
    <property type="match status" value="1"/>
</dbReference>